<name>BRCA1_RAT</name>
<evidence type="ECO:0000250" key="1"/>
<evidence type="ECO:0000250" key="2">
    <source>
        <dbReference type="UniProtKB" id="P38398"/>
    </source>
</evidence>
<evidence type="ECO:0000250" key="3">
    <source>
        <dbReference type="UniProtKB" id="P48754"/>
    </source>
</evidence>
<evidence type="ECO:0000255" key="4"/>
<evidence type="ECO:0000255" key="5">
    <source>
        <dbReference type="PROSITE-ProRule" id="PRU00033"/>
    </source>
</evidence>
<evidence type="ECO:0000255" key="6">
    <source>
        <dbReference type="PROSITE-ProRule" id="PRU00175"/>
    </source>
</evidence>
<evidence type="ECO:0000256" key="7">
    <source>
        <dbReference type="SAM" id="MobiDB-lite"/>
    </source>
</evidence>
<evidence type="ECO:0000305" key="8"/>
<evidence type="ECO:0007829" key="9">
    <source>
        <dbReference type="PDB" id="1L0B"/>
    </source>
</evidence>
<comment type="function">
    <text evidence="2">E3 ubiquitin-protein ligase that specifically mediates the formation of 'Lys-6'-linked polyubiquitin chains and plays a central role in DNA repair by facilitating cellular responses to DNA damage. It is unclear whether it also mediates the formation of other types of polyubiquitin chains. The BRCA1-BARD1 heterodimer coordinates a diverse range of cellular pathways such as DNA damage repair, ubiquitination and transcriptional regulation to maintain genomic stability. Regulates centrosomal microtubule nucleation. Required for appropriate cell cycle arrests after ionizing irradiation in both the S-phase and the G2 phase of the cell cycle. Required for FANCD2 targeting to sites of DNA damage. Inhibits lipid synthesis by binding to inactive phosphorylated ACACA and preventing its dephosphorylation. Contributes to homologous recombination repair (HRR) via its direct interaction with PALB2, fine-tunes recombinational repair partly through its modulatory role in the PALB2-dependent loading of BRCA2-RAD51 repair machinery at DNA breaks. Component of the BRCA1-RBBP8 complex which regulates CHEK1 activation and controls cell cycle G2/M checkpoints on DNA damage via BRCA1-mediated ubiquitination of RBBP8. Acts as a transcriptional activator.</text>
</comment>
<comment type="catalytic activity">
    <reaction evidence="2">
        <text>S-ubiquitinyl-[E2 ubiquitin-conjugating enzyme]-L-cysteine + [acceptor protein]-L-lysine = [E2 ubiquitin-conjugating enzyme]-L-cysteine + N(6)-ubiquitinyl-[acceptor protein]-L-lysine.</text>
        <dbReference type="EC" id="2.3.2.27"/>
    </reaction>
</comment>
<comment type="pathway">
    <text>Protein modification; protein ubiquitination.</text>
</comment>
<comment type="subunit">
    <text evidence="2">Heterodimer with BARD1. Part of the BRCA1-associated genome surveillance complex (BASC), which contains BRCA1, MSH2, MSH6, MLH1, ATM, BLM, PMS2 and the MRE11-RAD50-NBN protein (MRN) complex. This association could be a dynamic process changing throughout the cell cycle and within subnuclear domains. Component of the BRCA1-A complex, at least composed of BRCA1, BARD1, UIMC1/RAP80, ABRAXAS1, BRCC3/BRCC36, BABAM2 and BABAM1/NBA1. Interacts (via the BRCT domains) with ABRAXAS1 (phosphorylated form); this is important for recruitment to sites of DNA damage. Can form a heterotetramer with two molecules of ABRAXAS1 (phosphorylated form). Component of the BRCA1-RBBP8 complex. Interacts (via the BRCT domains) with RBBP8 ('Ser-327' phosphorylated form); the interaction ubiquitinates RBBP8, regulates CHEK1 activation, and involves RBBP8 in BRCA1-dependent G2/M checkpoint control on DNA damage. Associates with RNA polymerase II holoenzyme. Interacts with SMC1A, NELFB, DCLRE1C, CLSPN. CHEK1, CHEK2, BAP1, BRCC3, UBXN1 and PCLAF. Interacts (via BRCT domains) with BRIP1 (phosphorylated form). Interacts with FANCD2 (ubiquitinated form). Interacts with H2AX (phosphorylated on 'Ser-140'). Interacts (via the BRCT domains) with ACACA (phosphorylated form); the interaction prevents dephosphorylation of ACACA. Part of a BRCA complex containing BRCA1, BRCA2 and PALB2. Interacts directly with PALB2; the interaction is essential for its function in HRR. Interacts directly with BRCA2; the interaction occurs only in the presence of PALB2 which serves as the bridging protein. Interacts (via the BRCT domains) with LMO4; the interaction represses the transcriptional activity of BRCA1. Interacts (via the BRCT domains) with CCAR2 (via N-terminus); the interaction represses the transcriptional activator activity of BRCA1 (By similarity). Interacts with EXD2 (By similarity). Interacts (via C-terminus) with DHX9; this interaction is direct and links BRCA1 to the RNA polymerase II holoenzyme (By similarity). Interacts with DNA helicase ZGRF1; the interaction is increased following DNA damage induction (By similarity).</text>
</comment>
<comment type="subcellular location">
    <subcellularLocation>
        <location evidence="2">Nucleus</location>
    </subcellularLocation>
    <subcellularLocation>
        <location evidence="3">Chromosome</location>
    </subcellularLocation>
    <subcellularLocation>
        <location evidence="2">Cytoplasm</location>
    </subcellularLocation>
    <text evidence="2">Localizes at sites of DNA damage at double-strand breaks (DSBs); recruitment to DNA damage sites is mediated by the BRCA1-A complex. Translocated to the cytoplasm during UV-induced apoptosis.</text>
</comment>
<comment type="domain">
    <text evidence="2">The BRCT domains recognize and bind phosphorylated pSXXF motif on proteins. The interaction with the phosphorylated pSXXF motif of ABRAXAS1, recruits BRCA1 at DNA damage sites.</text>
</comment>
<comment type="domain">
    <text evidence="2">The RING-type zinc finger domain interacts with BAP1.</text>
</comment>
<comment type="PTM">
    <text evidence="2">Phosphorylated in response to IR, UV, and various stimuli that cause checkpoint activation, probably by ATM or ATR. Phosphorylation at Ser-975 by CHEK2 regulates mitotic spindle assembly. Phosphorylation by AURKA regulates centrosomal microtubule nucleation.</text>
</comment>
<comment type="PTM">
    <text evidence="2">Autoubiquitinated, undergoes 'Lys-6'-linked polyubiquitination. 'Lys-6'-linked polyubiquitination does not promote degradation.</text>
</comment>
<feature type="chain" id="PRO_0000055835" description="Breast cancer type 1 susceptibility protein homolog">
    <location>
        <begin position="1"/>
        <end position="1817"/>
    </location>
</feature>
<feature type="domain" description="BRCT 1" evidence="5">
    <location>
        <begin position="1588"/>
        <end position="1682"/>
    </location>
</feature>
<feature type="domain" description="BRCT 2" evidence="5">
    <location>
        <begin position="1701"/>
        <end position="1800"/>
    </location>
</feature>
<feature type="zinc finger region" description="RING-type" evidence="6">
    <location>
        <begin position="24"/>
        <end position="65"/>
    </location>
</feature>
<feature type="region of interest" description="Disordered" evidence="7">
    <location>
        <begin position="305"/>
        <end position="346"/>
    </location>
</feature>
<feature type="region of interest" description="Disordered" evidence="7">
    <location>
        <begin position="640"/>
        <end position="720"/>
    </location>
</feature>
<feature type="region of interest" description="Disordered" evidence="7">
    <location>
        <begin position="735"/>
        <end position="768"/>
    </location>
</feature>
<feature type="region of interest" description="Disordered" evidence="7">
    <location>
        <begin position="874"/>
        <end position="907"/>
    </location>
</feature>
<feature type="region of interest" description="Disordered" evidence="7">
    <location>
        <begin position="959"/>
        <end position="982"/>
    </location>
</feature>
<feature type="region of interest" description="Disordered" evidence="7">
    <location>
        <begin position="1146"/>
        <end position="1185"/>
    </location>
</feature>
<feature type="region of interest" description="Disordered" evidence="7">
    <location>
        <begin position="1259"/>
        <end position="1290"/>
    </location>
</feature>
<feature type="region of interest" description="Interaction with PALB2" evidence="1">
    <location>
        <begin position="1354"/>
        <end position="1381"/>
    </location>
</feature>
<feature type="region of interest" description="Disordered" evidence="7">
    <location>
        <begin position="1375"/>
        <end position="1486"/>
    </location>
</feature>
<feature type="region of interest" description="Disordered" evidence="7">
    <location>
        <begin position="1498"/>
        <end position="1534"/>
    </location>
</feature>
<feature type="short sequence motif" description="Nuclear localization signal" evidence="4">
    <location>
        <begin position="497"/>
        <end position="503"/>
    </location>
</feature>
<feature type="compositionally biased region" description="Polar residues" evidence="7">
    <location>
        <begin position="308"/>
        <end position="319"/>
    </location>
</feature>
<feature type="compositionally biased region" description="Basic and acidic residues" evidence="7">
    <location>
        <begin position="320"/>
        <end position="340"/>
    </location>
</feature>
<feature type="compositionally biased region" description="Polar residues" evidence="7">
    <location>
        <begin position="640"/>
        <end position="652"/>
    </location>
</feature>
<feature type="compositionally biased region" description="Basic and acidic residues" evidence="7">
    <location>
        <begin position="669"/>
        <end position="679"/>
    </location>
</feature>
<feature type="compositionally biased region" description="Low complexity" evidence="7">
    <location>
        <begin position="744"/>
        <end position="760"/>
    </location>
</feature>
<feature type="compositionally biased region" description="Basic and acidic residues" evidence="7">
    <location>
        <begin position="891"/>
        <end position="901"/>
    </location>
</feature>
<feature type="compositionally biased region" description="Polar residues" evidence="7">
    <location>
        <begin position="959"/>
        <end position="976"/>
    </location>
</feature>
<feature type="compositionally biased region" description="Basic residues" evidence="7">
    <location>
        <begin position="1161"/>
        <end position="1170"/>
    </location>
</feature>
<feature type="compositionally biased region" description="Acidic residues" evidence="7">
    <location>
        <begin position="1176"/>
        <end position="1185"/>
    </location>
</feature>
<feature type="compositionally biased region" description="Polar residues" evidence="7">
    <location>
        <begin position="1405"/>
        <end position="1426"/>
    </location>
</feature>
<feature type="compositionally biased region" description="Polar residues" evidence="7">
    <location>
        <begin position="1473"/>
        <end position="1485"/>
    </location>
</feature>
<feature type="modified residue" description="N-acetylmethionine" evidence="2">
    <location>
        <position position="1"/>
    </location>
</feature>
<feature type="modified residue" description="Phosphoserine" evidence="2">
    <location>
        <position position="114"/>
    </location>
</feature>
<feature type="modified residue" description="Phosphoserine" evidence="2">
    <location>
        <position position="393"/>
    </location>
</feature>
<feature type="modified residue" description="Phosphoserine" evidence="2">
    <location>
        <position position="686"/>
    </location>
</feature>
<feature type="modified residue" description="Phosphoserine" evidence="3">
    <location>
        <position position="706"/>
    </location>
</feature>
<feature type="modified residue" description="Phosphoserine" evidence="3">
    <location>
        <position position="717"/>
    </location>
</feature>
<feature type="modified residue" description="Phosphoserine; by CHEK2" evidence="2">
    <location>
        <position position="975"/>
    </location>
</feature>
<feature type="modified residue" description="Phosphoserine" evidence="2">
    <location>
        <position position="1153"/>
    </location>
</feature>
<feature type="modified residue" description="Phosphoserine" evidence="2">
    <location>
        <position position="1155"/>
    </location>
</feature>
<feature type="modified residue" description="Phosphoserine" evidence="2">
    <location>
        <position position="1181"/>
    </location>
</feature>
<feature type="modified residue" description="Phosphoserine" evidence="2">
    <location>
        <position position="1242"/>
    </location>
</feature>
<feature type="modified residue" description="Phosphoserine" evidence="2">
    <location>
        <position position="1298"/>
    </location>
</feature>
<feature type="modified residue" description="Phosphoserine" evidence="2">
    <location>
        <position position="1304"/>
    </location>
</feature>
<feature type="modified residue" description="Phosphoserine" evidence="2">
    <location>
        <position position="1344"/>
    </location>
</feature>
<feature type="modified residue" description="Phosphothreonine" evidence="2">
    <location>
        <position position="1351"/>
    </location>
</feature>
<feature type="modified residue" description="Phosphoserine" evidence="2">
    <location>
        <position position="1380"/>
    </location>
</feature>
<feature type="modified residue" description="Phosphoserine" evidence="2">
    <location>
        <position position="1414"/>
    </location>
</feature>
<feature type="modified residue" description="Phosphoserine" evidence="2">
    <location>
        <position position="1482"/>
    </location>
</feature>
<feature type="cross-link" description="Glycyl lysine isopeptide (Lys-Gly) (interchain with G-Cter in SUMO2)" evidence="2">
    <location>
        <position position="109"/>
    </location>
</feature>
<feature type="cross-link" description="Glycyl lysine isopeptide (Lys-Gly) (interchain with G-Cter in SUMO2)" evidence="2">
    <location>
        <position position="299"/>
    </location>
</feature>
<feature type="cross-link" description="Glycyl lysine isopeptide (Lys-Gly) (interchain with G-Cter in SUMO2)" evidence="2">
    <location>
        <position position="337"/>
    </location>
</feature>
<feature type="cross-link" description="Glycyl lysine isopeptide (Lys-Gly) (interchain with G-Cter in SUMO2)" evidence="2">
    <location>
        <position position="457"/>
    </location>
</feature>
<feature type="cross-link" description="Glycyl lysine isopeptide (Lys-Gly) (interchain with G-Cter in SUMO2)" evidence="2">
    <location>
        <position position="513"/>
    </location>
</feature>
<feature type="cross-link" description="Glycyl lysine isopeptide (Lys-Gly) (interchain with G-Cter in SUMO2)" evidence="2">
    <location>
        <position position="578"/>
    </location>
</feature>
<feature type="cross-link" description="Glycyl lysine isopeptide (Lys-Gly) (interchain with G-Cter in SUMO2)" evidence="2">
    <location>
        <position position="1049"/>
    </location>
</feature>
<feature type="sequence conflict" description="In Ref. 2; AAB40387/AAB37501." evidence="8" ref="2">
    <original>Q</original>
    <variation>K</variation>
    <location>
        <position position="38"/>
    </location>
</feature>
<feature type="sequence conflict" description="In Ref. 2; AAB40387/AAB37501." evidence="8" ref="2">
    <original>A</original>
    <variation>M</variation>
    <location>
        <position position="192"/>
    </location>
</feature>
<feature type="strand" evidence="9">
    <location>
        <begin position="1597"/>
        <end position="1602"/>
    </location>
</feature>
<feature type="helix" evidence="9">
    <location>
        <begin position="1605"/>
        <end position="1617"/>
    </location>
</feature>
<feature type="strand" evidence="9">
    <location>
        <begin position="1632"/>
        <end position="1635"/>
    </location>
</feature>
<feature type="strand" evidence="9">
    <location>
        <begin position="1641"/>
        <end position="1643"/>
    </location>
</feature>
<feature type="helix" evidence="9">
    <location>
        <begin position="1647"/>
        <end position="1654"/>
    </location>
</feature>
<feature type="strand" evidence="9">
    <location>
        <begin position="1658"/>
        <end position="1661"/>
    </location>
</feature>
<feature type="helix" evidence="9">
    <location>
        <begin position="1663"/>
        <end position="1669"/>
    </location>
</feature>
<feature type="turn" evidence="9">
    <location>
        <begin position="1670"/>
        <end position="1672"/>
    </location>
</feature>
<feature type="helix" evidence="9">
    <location>
        <begin position="1678"/>
        <end position="1680"/>
    </location>
</feature>
<feature type="turn" evidence="9">
    <location>
        <begin position="1686"/>
        <end position="1688"/>
    </location>
</feature>
<feature type="strand" evidence="9">
    <location>
        <begin position="1690"/>
        <end position="1692"/>
    </location>
</feature>
<feature type="helix" evidence="9">
    <location>
        <begin position="1694"/>
        <end position="1701"/>
    </location>
</feature>
<feature type="strand" evidence="9">
    <location>
        <begin position="1710"/>
        <end position="1713"/>
    </location>
</feature>
<feature type="strand" evidence="9">
    <location>
        <begin position="1718"/>
        <end position="1720"/>
    </location>
</feature>
<feature type="helix" evidence="9">
    <location>
        <begin position="1722"/>
        <end position="1731"/>
    </location>
</feature>
<feature type="strand" evidence="9">
    <location>
        <begin position="1735"/>
        <end position="1737"/>
    </location>
</feature>
<feature type="strand" evidence="9">
    <location>
        <begin position="1739"/>
        <end position="1741"/>
    </location>
</feature>
<feature type="helix" evidence="9">
    <location>
        <begin position="1743"/>
        <end position="1745"/>
    </location>
</feature>
<feature type="strand" evidence="9">
    <location>
        <begin position="1752"/>
        <end position="1755"/>
    </location>
</feature>
<feature type="strand" evidence="9">
    <location>
        <begin position="1777"/>
        <end position="1779"/>
    </location>
</feature>
<feature type="helix" evidence="9">
    <location>
        <begin position="1781"/>
        <end position="1788"/>
    </location>
</feature>
<feature type="helix" evidence="9">
    <location>
        <begin position="1795"/>
        <end position="1798"/>
    </location>
</feature>
<accession>O54952</accession>
<accession>P97951</accession>
<proteinExistence type="evidence at protein level"/>
<gene>
    <name type="primary">Brca1</name>
</gene>
<reference key="1">
    <citation type="journal article" date="1999" name="Mamm. Genome">
        <title>Sequence analysis of the rat brca1 homolog and its promoter region.</title>
        <authorList>
            <person name="Bennett L.M."/>
            <person name="Brownlee H.A."/>
            <person name="Hagavik S."/>
            <person name="Wiseman R.W."/>
        </authorList>
    </citation>
    <scope>NUCLEOTIDE SEQUENCE [MRNA]</scope>
    <source>
        <strain>Sprague-Dawley</strain>
    </source>
</reference>
<reference key="2">
    <citation type="journal article" date="1996" name="Carcinogenesis">
        <title>Cloning, genetic mapping and expression studies of the rat Brca1 gene.</title>
        <authorList>
            <person name="Chen K.S."/>
            <person name="Shepel L.A."/>
            <person name="Haag J.D."/>
            <person name="Heil G.M."/>
            <person name="Gould M.N."/>
        </authorList>
    </citation>
    <scope>NUCLEOTIDE SEQUENCE [GENOMIC DNA / MRNA] OF 8-222</scope>
    <source>
        <strain>Wistar Kyoto</strain>
        <tissue>Spleen</tissue>
    </source>
</reference>
<reference key="3">
    <citation type="journal article" date="2002" name="Genes Dev.">
        <title>Structure of the 53BP1 BRCT region bound to p53 and its comparison to the Brca1 BRCT structure.</title>
        <authorList>
            <person name="Joo W.S."/>
            <person name="Jeffrey P.D."/>
            <person name="Cantor S.B."/>
            <person name="Finnin M.S."/>
            <person name="Livingston D.M."/>
            <person name="Pavletich N.P."/>
        </authorList>
    </citation>
    <scope>X-RAY CRYSTALLOGRAPHY (2.3 ANGSTROMS) OF 1589-1817</scope>
</reference>
<sequence>MDLSAVRIQEVQNVLHAMQKILECPICLELIKEPVSTQCDHIFCKFCMLKLLNQKKGPSQCPLCKNEITKRSLQGSARFSQLVEELLKIIDAFELDTGMQCANGFSFSKKKNSSSELLNEDASIIQSVGYRNRVKKLQQIESGSATLKDSLSVQLSNLGIVRSMKKNRQTQPQNKSVYIALESDSSEERVNAPDGCSVRDQELFQIAPGGAGDEGKLNSAKKAACDFSEGIRNIEHHQCSDKDLNPTENHATERHPEKCPRISVANVHVEPCGTDARASSLQRGTRSLLFTEDRLDAEKAEFCDRSKQSGAAVSQQSRWADSKETCNGRPVPRTEGKADPNVDSLCGRKQWNHPKSLCPENSGATTDVPWITLNSSIQKVNEWFSRTGEMLTSDNASDRRPASNAEAAVVLEVSNEVDGCFSSSKKIDLVAPDPDNAVMCTSGRDFSKPVENIINDKIFGKTYQRKGSRPHLNHVTEIIGTFTTEPQIIQEQPFTNKLKRKRSTCLHPEDFIKKADLTVVQRISENLNQGTDQMEPNDQAMSITSNGQENRATGNDLQRGRNAHPIESLRKEPAFTAKAKSISNSISDLEVELNVHSSKAPKKNRLRRKSTRCVLPLEPISRNPSPPTCAELQIESCGSSEETKKNNSNQTPAGHIREPQLIEDTEPAADAKKNEPNEHIRKRSASDAFPEEKLMNKAGLLTSCSSPRKPQGPVNPSPERKGIEQLEMCQMPDNNKELGDLVLGGEPSGKPTEPSEESTSVSLVPDTDYDTQNSVSILEANTVRYARTGSVQCMTQFVASENPKELVHGSNNAGSGSECFKHPLRHELNHNQETIEMEDSELDTQYLQNTFQVSKRQSFALFSKLRSPQKDCTLVGARSVPSREPSPKVTSRGEQKERQGQEESEISHVQAVTVTVGLPVPCQEGKPGAVTMCADVSRLCPSSHYRSCENGLNTTDKSGISQNSHFRQSVSPLRSSIKTDNRKTLTEGRFEKHTERGMGNETAVQSTIHTISLNNRGDACLEASSGSVIEVHSTGENVQGQLDRNRGPKVNTVSLLDSTQPGVSKQSAPVSDKYLEIKQESKAVSADFSPCLFSDHLEKPMRSDKTFQVCSETPDDLLDDVEIQENASFGEGGITEKSAIFNGSVLRRESSRSPSPVTHASKSRSLHRGSRKLEFSEESDSTEDEDLPCFQHLLSRVSSTPELTRCSSVVTQRVPEKAKGTQAPRKSSISDCNNEVILGEASQEYQFSEDAKCSGSMFSSQHSAALGSPANALSQDPDFNPPSKQRRHQAENEEAFLSDKELISDHEDMAACLEEASDQEEDSIIPDSVASGYESEANLSEDCSQSDILTTQQRATMKDNLIKLQQEMAQLEAVLEQHGSQPSGHPPCLPADPCALEDLPDPEQNRSGTAILTSKNINENPVSQNPKRACDDKSQPQPPDGLPSGDKESGMRRPSPFKSPLTSSRCSARGHSRSLQNRNSTSQEELLQPAXLEKSCEPHNLTGRSCLPRQDLEGTPYPESGIRLVSSRDPDSESPKVSALVCTAPASTSALKISQGQVAGSCRSPAAGGADTAVVEIVSKIKPEVTSPKERAERDISMVVSGLTPKEVMIVQKFAEKYRLALTDVITEETTHVIIKTDAEFVCERTLKYFLGIAGGKWIVSYSWVIKSIQERKLLSVHEFEVKGDVVTGSNHQGPRRSRESQEKLFEGLQIYCCEPFTNMPKDELERMLQLCGASVVKELPLLTRDTGAHPIVLVQPSAWTEDNDCPDIGQLCKGRLVMWDWVLDSISVYRCRDLDAYLVQNITCGRDGSEPQDSND</sequence>
<organism>
    <name type="scientific">Rattus norvegicus</name>
    <name type="common">Rat</name>
    <dbReference type="NCBI Taxonomy" id="10116"/>
    <lineage>
        <taxon>Eukaryota</taxon>
        <taxon>Metazoa</taxon>
        <taxon>Chordata</taxon>
        <taxon>Craniata</taxon>
        <taxon>Vertebrata</taxon>
        <taxon>Euteleostomi</taxon>
        <taxon>Mammalia</taxon>
        <taxon>Eutheria</taxon>
        <taxon>Euarchontoglires</taxon>
        <taxon>Glires</taxon>
        <taxon>Rodentia</taxon>
        <taxon>Myomorpha</taxon>
        <taxon>Muroidea</taxon>
        <taxon>Muridae</taxon>
        <taxon>Murinae</taxon>
        <taxon>Rattus</taxon>
    </lineage>
</organism>
<dbReference type="EC" id="2.3.2.27" evidence="2"/>
<dbReference type="EMBL" id="AF036760">
    <property type="protein sequence ID" value="AAC36493.1"/>
    <property type="molecule type" value="mRNA"/>
</dbReference>
<dbReference type="EMBL" id="S82504">
    <property type="status" value="NOT_ANNOTATED_CDS"/>
    <property type="molecule type" value="Genomic_DNA"/>
</dbReference>
<dbReference type="EMBL" id="S82502">
    <property type="status" value="NOT_ANNOTATED_CDS"/>
    <property type="molecule type" value="Genomic_DNA"/>
</dbReference>
<dbReference type="EMBL" id="U60523">
    <property type="protein sequence ID" value="AAB40387.1"/>
    <property type="molecule type" value="mRNA"/>
</dbReference>
<dbReference type="EMBL" id="S82500">
    <property type="protein sequence ID" value="AAB37501.1"/>
    <property type="molecule type" value="Genomic_DNA"/>
</dbReference>
<dbReference type="RefSeq" id="NP_036646.1">
    <property type="nucleotide sequence ID" value="NM_012514.1"/>
</dbReference>
<dbReference type="PDB" id="1L0B">
    <property type="method" value="X-ray"/>
    <property type="resolution" value="2.30 A"/>
    <property type="chains" value="A=1589-1817"/>
</dbReference>
<dbReference type="PDBsum" id="1L0B"/>
<dbReference type="SMR" id="O54952"/>
<dbReference type="FunCoup" id="O54952">
    <property type="interactions" value="1419"/>
</dbReference>
<dbReference type="STRING" id="10116.ENSRNOP00000072366"/>
<dbReference type="GlyGen" id="O54952">
    <property type="glycosylation" value="2 sites"/>
</dbReference>
<dbReference type="iPTMnet" id="O54952"/>
<dbReference type="PhosphoSitePlus" id="O54952"/>
<dbReference type="PaxDb" id="10116-ENSRNOP00000028109"/>
<dbReference type="GeneID" id="497672"/>
<dbReference type="KEGG" id="rno:497672"/>
<dbReference type="UCSC" id="RGD:2218">
    <property type="organism name" value="rat"/>
</dbReference>
<dbReference type="AGR" id="RGD:2218"/>
<dbReference type="CTD" id="672"/>
<dbReference type="RGD" id="2218">
    <property type="gene designation" value="Brca1"/>
</dbReference>
<dbReference type="eggNOG" id="KOG4362">
    <property type="taxonomic scope" value="Eukaryota"/>
</dbReference>
<dbReference type="InParanoid" id="O54952"/>
<dbReference type="PhylomeDB" id="O54952"/>
<dbReference type="Reactome" id="R-RNO-3108214">
    <property type="pathway name" value="SUMOylation of DNA damage response and repair proteins"/>
</dbReference>
<dbReference type="Reactome" id="R-RNO-5685938">
    <property type="pathway name" value="HDR through Single Strand Annealing (SSA)"/>
</dbReference>
<dbReference type="Reactome" id="R-RNO-5685942">
    <property type="pathway name" value="HDR through Homologous Recombination (HRR)"/>
</dbReference>
<dbReference type="Reactome" id="R-RNO-5689901">
    <property type="pathway name" value="Metalloprotease DUBs"/>
</dbReference>
<dbReference type="Reactome" id="R-RNO-5693565">
    <property type="pathway name" value="Recruitment and ATM-mediated phosphorylation of repair and signaling proteins at DNA double strand breaks"/>
</dbReference>
<dbReference type="Reactome" id="R-RNO-5693568">
    <property type="pathway name" value="Resolution of D-loop Structures through Holliday Junction Intermediates"/>
</dbReference>
<dbReference type="Reactome" id="R-RNO-5693571">
    <property type="pathway name" value="Nonhomologous End-Joining (NHEJ)"/>
</dbReference>
<dbReference type="Reactome" id="R-RNO-5693579">
    <property type="pathway name" value="Homologous DNA Pairing and Strand Exchange"/>
</dbReference>
<dbReference type="Reactome" id="R-RNO-5693607">
    <property type="pathway name" value="Processing of DNA double-strand break ends"/>
</dbReference>
<dbReference type="Reactome" id="R-RNO-5693616">
    <property type="pathway name" value="Presynaptic phase of homologous DNA pairing and strand exchange"/>
</dbReference>
<dbReference type="Reactome" id="R-RNO-6804756">
    <property type="pathway name" value="Regulation of TP53 Activity through Phosphorylation"/>
</dbReference>
<dbReference type="Reactome" id="R-RNO-69473">
    <property type="pathway name" value="G2/M DNA damage checkpoint"/>
</dbReference>
<dbReference type="UniPathway" id="UPA00143"/>
<dbReference type="EvolutionaryTrace" id="O54952"/>
<dbReference type="PRO" id="PR:O54952"/>
<dbReference type="Proteomes" id="UP000002494">
    <property type="component" value="Unplaced"/>
</dbReference>
<dbReference type="GO" id="GO:0070531">
    <property type="term" value="C:BRCA1-A complex"/>
    <property type="evidence" value="ECO:0000266"/>
    <property type="project" value="RGD"/>
</dbReference>
<dbReference type="GO" id="GO:0070532">
    <property type="term" value="C:BRCA1-B complex"/>
    <property type="evidence" value="ECO:0000266"/>
    <property type="project" value="RGD"/>
</dbReference>
<dbReference type="GO" id="GO:0031436">
    <property type="term" value="C:BRCA1-BARD1 complex"/>
    <property type="evidence" value="ECO:0000250"/>
    <property type="project" value="UniProtKB"/>
</dbReference>
<dbReference type="GO" id="GO:0070533">
    <property type="term" value="C:BRCA1-C complex"/>
    <property type="evidence" value="ECO:0000266"/>
    <property type="project" value="RGD"/>
</dbReference>
<dbReference type="GO" id="GO:0005694">
    <property type="term" value="C:chromosome"/>
    <property type="evidence" value="ECO:0000250"/>
    <property type="project" value="UniProtKB"/>
</dbReference>
<dbReference type="GO" id="GO:0000793">
    <property type="term" value="C:condensed chromosome"/>
    <property type="evidence" value="ECO:0000266"/>
    <property type="project" value="RGD"/>
</dbReference>
<dbReference type="GO" id="GO:0000794">
    <property type="term" value="C:condensed nuclear chromosome"/>
    <property type="evidence" value="ECO:0000266"/>
    <property type="project" value="RGD"/>
</dbReference>
<dbReference type="GO" id="GO:0005737">
    <property type="term" value="C:cytoplasm"/>
    <property type="evidence" value="ECO:0000266"/>
    <property type="project" value="RGD"/>
</dbReference>
<dbReference type="GO" id="GO:1990391">
    <property type="term" value="C:DNA repair complex"/>
    <property type="evidence" value="ECO:0000266"/>
    <property type="project" value="RGD"/>
</dbReference>
<dbReference type="GO" id="GO:0043232">
    <property type="term" value="C:intracellular membraneless organelle"/>
    <property type="evidence" value="ECO:0000266"/>
    <property type="project" value="RGD"/>
</dbReference>
<dbReference type="GO" id="GO:0000800">
    <property type="term" value="C:lateral element"/>
    <property type="evidence" value="ECO:0000266"/>
    <property type="project" value="RGD"/>
</dbReference>
<dbReference type="GO" id="GO:0001673">
    <property type="term" value="C:male germ cell nucleus"/>
    <property type="evidence" value="ECO:0000266"/>
    <property type="project" value="RGD"/>
</dbReference>
<dbReference type="GO" id="GO:0005759">
    <property type="term" value="C:mitochondrial matrix"/>
    <property type="evidence" value="ECO:0000314"/>
    <property type="project" value="RGD"/>
</dbReference>
<dbReference type="GO" id="GO:0000152">
    <property type="term" value="C:nuclear ubiquitin ligase complex"/>
    <property type="evidence" value="ECO:0000266"/>
    <property type="project" value="RGD"/>
</dbReference>
<dbReference type="GO" id="GO:0005634">
    <property type="term" value="C:nucleus"/>
    <property type="evidence" value="ECO:0000250"/>
    <property type="project" value="UniProtKB"/>
</dbReference>
<dbReference type="GO" id="GO:0005886">
    <property type="term" value="C:plasma membrane"/>
    <property type="evidence" value="ECO:0000266"/>
    <property type="project" value="RGD"/>
</dbReference>
<dbReference type="GO" id="GO:0032991">
    <property type="term" value="C:protein-containing complex"/>
    <property type="evidence" value="ECO:0000266"/>
    <property type="project" value="RGD"/>
</dbReference>
<dbReference type="GO" id="GO:1990904">
    <property type="term" value="C:ribonucleoprotein complex"/>
    <property type="evidence" value="ECO:0000266"/>
    <property type="project" value="RGD"/>
</dbReference>
<dbReference type="GO" id="GO:0001741">
    <property type="term" value="C:XY body"/>
    <property type="evidence" value="ECO:0000266"/>
    <property type="project" value="RGD"/>
</dbReference>
<dbReference type="GO" id="GO:0003682">
    <property type="term" value="F:chromatin binding"/>
    <property type="evidence" value="ECO:0000314"/>
    <property type="project" value="RGD"/>
</dbReference>
<dbReference type="GO" id="GO:0003684">
    <property type="term" value="F:damaged DNA binding"/>
    <property type="evidence" value="ECO:0000266"/>
    <property type="project" value="RGD"/>
</dbReference>
<dbReference type="GO" id="GO:0019899">
    <property type="term" value="F:enzyme binding"/>
    <property type="evidence" value="ECO:0000266"/>
    <property type="project" value="RGD"/>
</dbReference>
<dbReference type="GO" id="GO:0042802">
    <property type="term" value="F:identical protein binding"/>
    <property type="evidence" value="ECO:0000266"/>
    <property type="project" value="RGD"/>
</dbReference>
<dbReference type="GO" id="GO:0002039">
    <property type="term" value="F:p53 binding"/>
    <property type="evidence" value="ECO:0000266"/>
    <property type="project" value="RGD"/>
</dbReference>
<dbReference type="GO" id="GO:0003723">
    <property type="term" value="F:RNA binding"/>
    <property type="evidence" value="ECO:0000266"/>
    <property type="project" value="RGD"/>
</dbReference>
<dbReference type="GO" id="GO:0070063">
    <property type="term" value="F:RNA polymerase binding"/>
    <property type="evidence" value="ECO:0000250"/>
    <property type="project" value="UniProtKB"/>
</dbReference>
<dbReference type="GO" id="GO:0000976">
    <property type="term" value="F:transcription cis-regulatory region binding"/>
    <property type="evidence" value="ECO:0000266"/>
    <property type="project" value="RGD"/>
</dbReference>
<dbReference type="GO" id="GO:0003713">
    <property type="term" value="F:transcription coactivator activity"/>
    <property type="evidence" value="ECO:0000250"/>
    <property type="project" value="UniProtKB"/>
</dbReference>
<dbReference type="GO" id="GO:0031625">
    <property type="term" value="F:ubiquitin protein ligase binding"/>
    <property type="evidence" value="ECO:0000266"/>
    <property type="project" value="RGD"/>
</dbReference>
<dbReference type="GO" id="GO:0004842">
    <property type="term" value="F:ubiquitin-protein transferase activity"/>
    <property type="evidence" value="ECO:0000250"/>
    <property type="project" value="UniProtKB"/>
</dbReference>
<dbReference type="GO" id="GO:0008270">
    <property type="term" value="F:zinc ion binding"/>
    <property type="evidence" value="ECO:0007669"/>
    <property type="project" value="UniProtKB-KW"/>
</dbReference>
<dbReference type="GO" id="GO:0071681">
    <property type="term" value="P:cellular response to indole-3-methanol"/>
    <property type="evidence" value="ECO:0000266"/>
    <property type="project" value="RGD"/>
</dbReference>
<dbReference type="GO" id="GO:0071479">
    <property type="term" value="P:cellular response to ionizing radiation"/>
    <property type="evidence" value="ECO:0000266"/>
    <property type="project" value="RGD"/>
</dbReference>
<dbReference type="GO" id="GO:0071356">
    <property type="term" value="P:cellular response to tumor necrosis factor"/>
    <property type="evidence" value="ECO:0000266"/>
    <property type="project" value="RGD"/>
</dbReference>
<dbReference type="GO" id="GO:0007098">
    <property type="term" value="P:centrosome cycle"/>
    <property type="evidence" value="ECO:0000266"/>
    <property type="project" value="RGD"/>
</dbReference>
<dbReference type="GO" id="GO:0043009">
    <property type="term" value="P:chordate embryonic development"/>
    <property type="evidence" value="ECO:0000266"/>
    <property type="project" value="RGD"/>
</dbReference>
<dbReference type="GO" id="GO:0007059">
    <property type="term" value="P:chromosome segregation"/>
    <property type="evidence" value="ECO:0000266"/>
    <property type="project" value="RGD"/>
</dbReference>
<dbReference type="GO" id="GO:0006974">
    <property type="term" value="P:DNA damage response"/>
    <property type="evidence" value="ECO:0000266"/>
    <property type="project" value="RGD"/>
</dbReference>
<dbReference type="GO" id="GO:0006302">
    <property type="term" value="P:double-strand break repair"/>
    <property type="evidence" value="ECO:0000266"/>
    <property type="project" value="RGD"/>
</dbReference>
<dbReference type="GO" id="GO:0000724">
    <property type="term" value="P:double-strand break repair via homologous recombination"/>
    <property type="evidence" value="ECO:0000266"/>
    <property type="project" value="RGD"/>
</dbReference>
<dbReference type="GO" id="GO:0006633">
    <property type="term" value="P:fatty acid biosynthetic process"/>
    <property type="evidence" value="ECO:0007669"/>
    <property type="project" value="UniProtKB-KW"/>
</dbReference>
<dbReference type="GO" id="GO:0008630">
    <property type="term" value="P:intrinsic apoptotic signaling pathway in response to DNA damage"/>
    <property type="evidence" value="ECO:0000266"/>
    <property type="project" value="RGD"/>
</dbReference>
<dbReference type="GO" id="GO:0007095">
    <property type="term" value="P:mitotic G2 DNA damage checkpoint signaling"/>
    <property type="evidence" value="ECO:0000266"/>
    <property type="project" value="RGD"/>
</dbReference>
<dbReference type="GO" id="GO:0044818">
    <property type="term" value="P:mitotic G2/M transition checkpoint"/>
    <property type="evidence" value="ECO:0000266"/>
    <property type="project" value="RGD"/>
</dbReference>
<dbReference type="GO" id="GO:0030308">
    <property type="term" value="P:negative regulation of cell growth"/>
    <property type="evidence" value="ECO:0000266"/>
    <property type="project" value="RGD"/>
</dbReference>
<dbReference type="GO" id="GO:0045892">
    <property type="term" value="P:negative regulation of DNA-templated transcription"/>
    <property type="evidence" value="ECO:0000266"/>
    <property type="project" value="RGD"/>
</dbReference>
<dbReference type="GO" id="GO:1902042">
    <property type="term" value="P:negative regulation of extrinsic apoptotic signaling pathway via death domain receptors"/>
    <property type="evidence" value="ECO:0000266"/>
    <property type="project" value="RGD"/>
</dbReference>
<dbReference type="GO" id="GO:0045717">
    <property type="term" value="P:negative regulation of fatty acid biosynthetic process"/>
    <property type="evidence" value="ECO:0000250"/>
    <property type="project" value="UniProtKB"/>
</dbReference>
<dbReference type="GO" id="GO:0044027">
    <property type="term" value="P:negative regulation of gene expression via chromosomal CpG island methylation"/>
    <property type="evidence" value="ECO:0000266"/>
    <property type="project" value="RGD"/>
</dbReference>
<dbReference type="GO" id="GO:0033147">
    <property type="term" value="P:negative regulation of intracellular estrogen receptor signaling pathway"/>
    <property type="evidence" value="ECO:0000266"/>
    <property type="project" value="RGD"/>
</dbReference>
<dbReference type="GO" id="GO:2000378">
    <property type="term" value="P:negative regulation of reactive oxygen species metabolic process"/>
    <property type="evidence" value="ECO:0000266"/>
    <property type="project" value="RGD"/>
</dbReference>
<dbReference type="GO" id="GO:0045766">
    <property type="term" value="P:positive regulation of angiogenesis"/>
    <property type="evidence" value="ECO:0000266"/>
    <property type="project" value="RGD"/>
</dbReference>
<dbReference type="GO" id="GO:0045739">
    <property type="term" value="P:positive regulation of DNA repair"/>
    <property type="evidence" value="ECO:0000266"/>
    <property type="project" value="RGD"/>
</dbReference>
<dbReference type="GO" id="GO:0045893">
    <property type="term" value="P:positive regulation of DNA-templated transcription"/>
    <property type="evidence" value="ECO:0000250"/>
    <property type="project" value="UniProtKB"/>
</dbReference>
<dbReference type="GO" id="GO:0010628">
    <property type="term" value="P:positive regulation of gene expression"/>
    <property type="evidence" value="ECO:0000266"/>
    <property type="project" value="RGD"/>
</dbReference>
<dbReference type="GO" id="GO:0042307">
    <property type="term" value="P:positive regulation of protein import into nucleus"/>
    <property type="evidence" value="ECO:0000315"/>
    <property type="project" value="RGD"/>
</dbReference>
<dbReference type="GO" id="GO:0045944">
    <property type="term" value="P:positive regulation of transcription by RNA polymerase II"/>
    <property type="evidence" value="ECO:0000266"/>
    <property type="project" value="RGD"/>
</dbReference>
<dbReference type="GO" id="GO:0010575">
    <property type="term" value="P:positive regulation of vascular endothelial growth factor production"/>
    <property type="evidence" value="ECO:0000266"/>
    <property type="project" value="RGD"/>
</dbReference>
<dbReference type="GO" id="GO:0006301">
    <property type="term" value="P:postreplication repair"/>
    <property type="evidence" value="ECO:0000266"/>
    <property type="project" value="RGD"/>
</dbReference>
<dbReference type="GO" id="GO:0051865">
    <property type="term" value="P:protein autoubiquitination"/>
    <property type="evidence" value="ECO:0000250"/>
    <property type="project" value="UniProtKB"/>
</dbReference>
<dbReference type="GO" id="GO:0085020">
    <property type="term" value="P:protein K6-linked ubiquitination"/>
    <property type="evidence" value="ECO:0000250"/>
    <property type="project" value="UniProtKB"/>
</dbReference>
<dbReference type="GO" id="GO:0016567">
    <property type="term" value="P:protein ubiquitination"/>
    <property type="evidence" value="ECO:0000266"/>
    <property type="project" value="RGD"/>
</dbReference>
<dbReference type="GO" id="GO:0060816">
    <property type="term" value="P:random inactivation of X chromosome"/>
    <property type="evidence" value="ECO:0000266"/>
    <property type="project" value="RGD"/>
</dbReference>
<dbReference type="GO" id="GO:0051726">
    <property type="term" value="P:regulation of cell cycle"/>
    <property type="evidence" value="ECO:0000266"/>
    <property type="project" value="RGD"/>
</dbReference>
<dbReference type="GO" id="GO:0006357">
    <property type="term" value="P:regulation of transcription by RNA polymerase II"/>
    <property type="evidence" value="ECO:0000250"/>
    <property type="project" value="UniProtKB"/>
</dbReference>
<dbReference type="GO" id="GO:0032355">
    <property type="term" value="P:response to estradiol"/>
    <property type="evidence" value="ECO:0000270"/>
    <property type="project" value="RGD"/>
</dbReference>
<dbReference type="GO" id="GO:0033595">
    <property type="term" value="P:response to genistein"/>
    <property type="evidence" value="ECO:0000270"/>
    <property type="project" value="RGD"/>
</dbReference>
<dbReference type="GO" id="GO:0010212">
    <property type="term" value="P:response to ionizing radiation"/>
    <property type="evidence" value="ECO:0000266"/>
    <property type="project" value="RGD"/>
</dbReference>
<dbReference type="GO" id="GO:0033993">
    <property type="term" value="P:response to lipid"/>
    <property type="evidence" value="ECO:0000270"/>
    <property type="project" value="RGD"/>
</dbReference>
<dbReference type="GO" id="GO:0007584">
    <property type="term" value="P:response to nutrient"/>
    <property type="evidence" value="ECO:0000270"/>
    <property type="project" value="RGD"/>
</dbReference>
<dbReference type="GO" id="GO:0007549">
    <property type="term" value="P:sex-chromosome dosage compensation"/>
    <property type="evidence" value="ECO:0000318"/>
    <property type="project" value="GO_Central"/>
</dbReference>
<dbReference type="CDD" id="cd17735">
    <property type="entry name" value="BRCT_BRCA1_rpt1"/>
    <property type="match status" value="1"/>
</dbReference>
<dbReference type="CDD" id="cd17721">
    <property type="entry name" value="BRCT_BRCA1_rpt2"/>
    <property type="match status" value="1"/>
</dbReference>
<dbReference type="CDD" id="cd16498">
    <property type="entry name" value="RING-HC_BRCA1"/>
    <property type="match status" value="1"/>
</dbReference>
<dbReference type="DisProt" id="DP03051"/>
<dbReference type="FunFam" id="3.30.40.10:FF:000213">
    <property type="entry name" value="Breast cancer type 1 susceptibility protein homolog"/>
    <property type="match status" value="1"/>
</dbReference>
<dbReference type="FunFam" id="3.40.50.10190:FF:000006">
    <property type="entry name" value="Breast cancer type 1 susceptibility protein homolog"/>
    <property type="match status" value="1"/>
</dbReference>
<dbReference type="FunFam" id="3.40.50.10190:FF:000025">
    <property type="entry name" value="Breast cancer type 1 susceptibility protein homolog"/>
    <property type="match status" value="1"/>
</dbReference>
<dbReference type="Gene3D" id="3.40.50.10190">
    <property type="entry name" value="BRCT domain"/>
    <property type="match status" value="2"/>
</dbReference>
<dbReference type="Gene3D" id="3.30.40.10">
    <property type="entry name" value="Zinc/RING finger domain, C3HC4 (zinc finger)"/>
    <property type="match status" value="1"/>
</dbReference>
<dbReference type="IDEAL" id="IID50304"/>
<dbReference type="InterPro" id="IPR011364">
    <property type="entry name" value="BRCA1"/>
</dbReference>
<dbReference type="InterPro" id="IPR031099">
    <property type="entry name" value="BRCA1-associated"/>
</dbReference>
<dbReference type="InterPro" id="IPR025994">
    <property type="entry name" value="BRCA1_serine_dom"/>
</dbReference>
<dbReference type="InterPro" id="IPR001357">
    <property type="entry name" value="BRCT_dom"/>
</dbReference>
<dbReference type="InterPro" id="IPR036420">
    <property type="entry name" value="BRCT_dom_sf"/>
</dbReference>
<dbReference type="InterPro" id="IPR018957">
    <property type="entry name" value="Znf_C3HC4_RING-type"/>
</dbReference>
<dbReference type="InterPro" id="IPR001841">
    <property type="entry name" value="Znf_RING"/>
</dbReference>
<dbReference type="InterPro" id="IPR013083">
    <property type="entry name" value="Znf_RING/FYVE/PHD"/>
</dbReference>
<dbReference type="InterPro" id="IPR017907">
    <property type="entry name" value="Znf_RING_CS"/>
</dbReference>
<dbReference type="PANTHER" id="PTHR13763:SF0">
    <property type="entry name" value="BREAST CANCER TYPE 1 SUSCEPTIBILITY PROTEIN"/>
    <property type="match status" value="1"/>
</dbReference>
<dbReference type="PANTHER" id="PTHR13763">
    <property type="entry name" value="BREAST CANCER TYPE 1 SUSCEPTIBILITY PROTEIN BRCA1"/>
    <property type="match status" value="1"/>
</dbReference>
<dbReference type="Pfam" id="PF00533">
    <property type="entry name" value="BRCT"/>
    <property type="match status" value="2"/>
</dbReference>
<dbReference type="Pfam" id="PF12820">
    <property type="entry name" value="BRCT_assoc"/>
    <property type="match status" value="1"/>
</dbReference>
<dbReference type="Pfam" id="PF00097">
    <property type="entry name" value="zf-C3HC4"/>
    <property type="match status" value="1"/>
</dbReference>
<dbReference type="PIRSF" id="PIRSF001734">
    <property type="entry name" value="BRCA1"/>
    <property type="match status" value="1"/>
</dbReference>
<dbReference type="PRINTS" id="PR00493">
    <property type="entry name" value="BRSTCANCERI"/>
</dbReference>
<dbReference type="SMART" id="SM00292">
    <property type="entry name" value="BRCT"/>
    <property type="match status" value="2"/>
</dbReference>
<dbReference type="SMART" id="SM00184">
    <property type="entry name" value="RING"/>
    <property type="match status" value="1"/>
</dbReference>
<dbReference type="SUPFAM" id="SSF52113">
    <property type="entry name" value="BRCT domain"/>
    <property type="match status" value="2"/>
</dbReference>
<dbReference type="SUPFAM" id="SSF57850">
    <property type="entry name" value="RING/U-box"/>
    <property type="match status" value="1"/>
</dbReference>
<dbReference type="PROSITE" id="PS50172">
    <property type="entry name" value="BRCT"/>
    <property type="match status" value="2"/>
</dbReference>
<dbReference type="PROSITE" id="PS00518">
    <property type="entry name" value="ZF_RING_1"/>
    <property type="match status" value="1"/>
</dbReference>
<dbReference type="PROSITE" id="PS50089">
    <property type="entry name" value="ZF_RING_2"/>
    <property type="match status" value="1"/>
</dbReference>
<keyword id="KW-0002">3D-structure</keyword>
<keyword id="KW-0007">Acetylation</keyword>
<keyword id="KW-0010">Activator</keyword>
<keyword id="KW-0131">Cell cycle</keyword>
<keyword id="KW-0158">Chromosome</keyword>
<keyword id="KW-0963">Cytoplasm</keyword>
<keyword id="KW-0227">DNA damage</keyword>
<keyword id="KW-0233">DNA recombination</keyword>
<keyword id="KW-0234">DNA repair</keyword>
<keyword id="KW-0238">DNA-binding</keyword>
<keyword id="KW-0275">Fatty acid biosynthesis</keyword>
<keyword id="KW-0276">Fatty acid metabolism</keyword>
<keyword id="KW-1017">Isopeptide bond</keyword>
<keyword id="KW-0444">Lipid biosynthesis</keyword>
<keyword id="KW-0443">Lipid metabolism</keyword>
<keyword id="KW-0479">Metal-binding</keyword>
<keyword id="KW-0539">Nucleus</keyword>
<keyword id="KW-0597">Phosphoprotein</keyword>
<keyword id="KW-1185">Reference proteome</keyword>
<keyword id="KW-0677">Repeat</keyword>
<keyword id="KW-0804">Transcription</keyword>
<keyword id="KW-0805">Transcription regulation</keyword>
<keyword id="KW-0808">Transferase</keyword>
<keyword id="KW-0043">Tumor suppressor</keyword>
<keyword id="KW-0832">Ubl conjugation</keyword>
<keyword id="KW-0833">Ubl conjugation pathway</keyword>
<keyword id="KW-0862">Zinc</keyword>
<keyword id="KW-0863">Zinc-finger</keyword>
<protein>
    <recommendedName>
        <fullName>Breast cancer type 1 susceptibility protein homolog</fullName>
        <ecNumber evidence="2">2.3.2.27</ecNumber>
    </recommendedName>
    <alternativeName>
        <fullName evidence="8">RING-type E3 ubiquitin transferase BRCA1</fullName>
    </alternativeName>
</protein>